<accession>Q2Y9R4</accession>
<reference key="1">
    <citation type="submission" date="2005-08" db="EMBL/GenBank/DDBJ databases">
        <title>Complete sequence of chromosome 1 of Nitrosospira multiformis ATCC 25196.</title>
        <authorList>
            <person name="Copeland A."/>
            <person name="Lucas S."/>
            <person name="Lapidus A."/>
            <person name="Barry K."/>
            <person name="Detter J.C."/>
            <person name="Glavina T."/>
            <person name="Hammon N."/>
            <person name="Israni S."/>
            <person name="Pitluck S."/>
            <person name="Chain P."/>
            <person name="Malfatti S."/>
            <person name="Shin M."/>
            <person name="Vergez L."/>
            <person name="Schmutz J."/>
            <person name="Larimer F."/>
            <person name="Land M."/>
            <person name="Hauser L."/>
            <person name="Kyrpides N."/>
            <person name="Lykidis A."/>
            <person name="Richardson P."/>
        </authorList>
    </citation>
    <scope>NUCLEOTIDE SEQUENCE [LARGE SCALE GENOMIC DNA]</scope>
    <source>
        <strain>ATCC 25196 / NCIMB 11849 / C 71</strain>
    </source>
</reference>
<name>CTAA_NITMU</name>
<dbReference type="EC" id="1.17.99.9" evidence="1"/>
<dbReference type="EMBL" id="CP000103">
    <property type="protein sequence ID" value="ABB74507.1"/>
    <property type="molecule type" value="Genomic_DNA"/>
</dbReference>
<dbReference type="RefSeq" id="WP_011380548.1">
    <property type="nucleotide sequence ID" value="NC_007614.1"/>
</dbReference>
<dbReference type="SMR" id="Q2Y9R4"/>
<dbReference type="STRING" id="323848.Nmul_A1204"/>
<dbReference type="KEGG" id="nmu:Nmul_A1204"/>
<dbReference type="eggNOG" id="COG1612">
    <property type="taxonomic scope" value="Bacteria"/>
</dbReference>
<dbReference type="HOGENOM" id="CLU_017627_0_0_4"/>
<dbReference type="OrthoDB" id="1447144at2"/>
<dbReference type="UniPathway" id="UPA00269">
    <property type="reaction ID" value="UER00713"/>
</dbReference>
<dbReference type="Proteomes" id="UP000002718">
    <property type="component" value="Chromosome"/>
</dbReference>
<dbReference type="GO" id="GO:0005886">
    <property type="term" value="C:plasma membrane"/>
    <property type="evidence" value="ECO:0007669"/>
    <property type="project" value="UniProtKB-SubCell"/>
</dbReference>
<dbReference type="GO" id="GO:0046872">
    <property type="term" value="F:metal ion binding"/>
    <property type="evidence" value="ECO:0007669"/>
    <property type="project" value="UniProtKB-KW"/>
</dbReference>
<dbReference type="GO" id="GO:0016653">
    <property type="term" value="F:oxidoreductase activity, acting on NAD(P)H, heme protein as acceptor"/>
    <property type="evidence" value="ECO:0007669"/>
    <property type="project" value="InterPro"/>
</dbReference>
<dbReference type="GO" id="GO:0006784">
    <property type="term" value="P:heme A biosynthetic process"/>
    <property type="evidence" value="ECO:0007669"/>
    <property type="project" value="UniProtKB-UniRule"/>
</dbReference>
<dbReference type="HAMAP" id="MF_01665">
    <property type="entry name" value="HemeA_synth_type2"/>
    <property type="match status" value="1"/>
</dbReference>
<dbReference type="InterPro" id="IPR003780">
    <property type="entry name" value="COX15/CtaA_fam"/>
</dbReference>
<dbReference type="InterPro" id="IPR023754">
    <property type="entry name" value="HemeA_Synthase_type2"/>
</dbReference>
<dbReference type="PANTHER" id="PTHR23289">
    <property type="entry name" value="CYTOCHROME C OXIDASE ASSEMBLY PROTEIN COX15"/>
    <property type="match status" value="1"/>
</dbReference>
<dbReference type="PANTHER" id="PTHR23289:SF2">
    <property type="entry name" value="CYTOCHROME C OXIDASE ASSEMBLY PROTEIN COX15 HOMOLOG"/>
    <property type="match status" value="1"/>
</dbReference>
<dbReference type="Pfam" id="PF02628">
    <property type="entry name" value="COX15-CtaA"/>
    <property type="match status" value="1"/>
</dbReference>
<protein>
    <recommendedName>
        <fullName evidence="1">Heme A synthase</fullName>
        <shortName evidence="1">HAS</shortName>
        <ecNumber evidence="1">1.17.99.9</ecNumber>
    </recommendedName>
    <alternativeName>
        <fullName evidence="1">Cytochrome aa3-controlling protein</fullName>
    </alternativeName>
</protein>
<proteinExistence type="inferred from homology"/>
<feature type="chain" id="PRO_0000349053" description="Heme A synthase">
    <location>
        <begin position="1"/>
        <end position="356"/>
    </location>
</feature>
<feature type="transmembrane region" description="Helical" evidence="1">
    <location>
        <begin position="23"/>
        <end position="43"/>
    </location>
</feature>
<feature type="transmembrane region" description="Helical" evidence="1">
    <location>
        <begin position="105"/>
        <end position="125"/>
    </location>
</feature>
<feature type="transmembrane region" description="Helical" evidence="1">
    <location>
        <begin position="141"/>
        <end position="161"/>
    </location>
</feature>
<feature type="transmembrane region" description="Helical" evidence="1">
    <location>
        <begin position="173"/>
        <end position="193"/>
    </location>
</feature>
<feature type="transmembrane region" description="Helical" evidence="1">
    <location>
        <begin position="212"/>
        <end position="232"/>
    </location>
</feature>
<feature type="transmembrane region" description="Helical" evidence="1">
    <location>
        <begin position="276"/>
        <end position="296"/>
    </location>
</feature>
<feature type="transmembrane region" description="Helical" evidence="1">
    <location>
        <begin position="307"/>
        <end position="327"/>
    </location>
</feature>
<feature type="transmembrane region" description="Helical" evidence="1">
    <location>
        <begin position="329"/>
        <end position="349"/>
    </location>
</feature>
<feature type="binding site" description="axial binding residue" evidence="1">
    <location>
        <position position="274"/>
    </location>
    <ligand>
        <name>heme</name>
        <dbReference type="ChEBI" id="CHEBI:30413"/>
    </ligand>
    <ligandPart>
        <name>Fe</name>
        <dbReference type="ChEBI" id="CHEBI:18248"/>
    </ligandPart>
</feature>
<feature type="binding site" description="axial binding residue" evidence="1">
    <location>
        <position position="335"/>
    </location>
    <ligand>
        <name>heme</name>
        <dbReference type="ChEBI" id="CHEBI:30413"/>
    </ligand>
    <ligandPart>
        <name>Fe</name>
        <dbReference type="ChEBI" id="CHEBI:18248"/>
    </ligandPart>
</feature>
<organism>
    <name type="scientific">Nitrosospira multiformis (strain ATCC 25196 / NCIMB 11849 / C 71)</name>
    <dbReference type="NCBI Taxonomy" id="323848"/>
    <lineage>
        <taxon>Bacteria</taxon>
        <taxon>Pseudomonadati</taxon>
        <taxon>Pseudomonadota</taxon>
        <taxon>Betaproteobacteria</taxon>
        <taxon>Nitrosomonadales</taxon>
        <taxon>Nitrosomonadaceae</taxon>
        <taxon>Nitrosospira</taxon>
    </lineage>
</organism>
<evidence type="ECO:0000255" key="1">
    <source>
        <dbReference type="HAMAP-Rule" id="MF_01665"/>
    </source>
</evidence>
<comment type="function">
    <text evidence="1">Catalyzes the conversion of heme O to heme A by two successive hydroxylations of the methyl group at C8. The first hydroxylation forms heme I, the second hydroxylation results in an unstable dihydroxymethyl group, which spontaneously dehydrates, resulting in the formyl group of heme A.</text>
</comment>
<comment type="catalytic activity">
    <reaction evidence="1">
        <text>Fe(II)-heme o + 2 A + H2O = Fe(II)-heme a + 2 AH2</text>
        <dbReference type="Rhea" id="RHEA:63388"/>
        <dbReference type="ChEBI" id="CHEBI:13193"/>
        <dbReference type="ChEBI" id="CHEBI:15377"/>
        <dbReference type="ChEBI" id="CHEBI:17499"/>
        <dbReference type="ChEBI" id="CHEBI:60530"/>
        <dbReference type="ChEBI" id="CHEBI:61715"/>
        <dbReference type="EC" id="1.17.99.9"/>
    </reaction>
    <physiologicalReaction direction="left-to-right" evidence="1">
        <dbReference type="Rhea" id="RHEA:63389"/>
    </physiologicalReaction>
</comment>
<comment type="cofactor">
    <cofactor evidence="1">
        <name>heme b</name>
        <dbReference type="ChEBI" id="CHEBI:60344"/>
    </cofactor>
</comment>
<comment type="pathway">
    <text evidence="1">Porphyrin-containing compound metabolism; heme A biosynthesis; heme A from heme O: step 1/1.</text>
</comment>
<comment type="subunit">
    <text evidence="1">Interacts with CtaB.</text>
</comment>
<comment type="subcellular location">
    <subcellularLocation>
        <location evidence="1">Cell membrane</location>
        <topology evidence="1">Multi-pass membrane protein</topology>
    </subcellularLocation>
</comment>
<comment type="similarity">
    <text evidence="1">Belongs to the COX15/CtaA family. Type 2 subfamily.</text>
</comment>
<sequence length="356" mass="39859">MQFVQTSTLPQKTDQKFAVQKPIAIWLFVCCALVFAMVVVGGVTRLTDSGLSIVEWQPLVGTVPPLSQNDWDELFEKYHQTPQYKKVNLGMSLEEFKTIFWWEYFHRLLGRVIGLAFFIPFLYFLMKKAVDRPLGLKLSGIFLLGALQGGMGWYMVKSGLVDNPHVSQYRLTAHLGLAFAIYAAMFWVALDLLNPGRGLSANSGLRGLLNFSTMLSALVFIMVLSGGFVAGIRAGLAYNTFPLMDGHFIPPELFMLEPWYRNFFDNMTTVQFDHRLIAWTLAILVPIFWLKSRAVPLSGSARLACTLLLIMLAVQITLGISTLLLVVPLTLAAAHQAGALLLFTAALWVNHELRRQ</sequence>
<gene>
    <name evidence="1" type="primary">ctaA</name>
    <name type="ordered locus">Nmul_A1204</name>
</gene>
<keyword id="KW-1003">Cell membrane</keyword>
<keyword id="KW-0350">Heme biosynthesis</keyword>
<keyword id="KW-0408">Iron</keyword>
<keyword id="KW-0472">Membrane</keyword>
<keyword id="KW-0479">Metal-binding</keyword>
<keyword id="KW-0560">Oxidoreductase</keyword>
<keyword id="KW-1185">Reference proteome</keyword>
<keyword id="KW-0812">Transmembrane</keyword>
<keyword id="KW-1133">Transmembrane helix</keyword>